<proteinExistence type="evidence at protein level"/>
<dbReference type="EC" id="2.1.1.-"/>
<dbReference type="EMBL" id="AJ248284">
    <property type="protein sequence ID" value="CAB49545.1"/>
    <property type="molecule type" value="Genomic_DNA"/>
</dbReference>
<dbReference type="EMBL" id="HE613800">
    <property type="protein sequence ID" value="CCE70017.1"/>
    <property type="molecule type" value="Genomic_DNA"/>
</dbReference>
<dbReference type="PIR" id="B75183">
    <property type="entry name" value="B75183"/>
</dbReference>
<dbReference type="RefSeq" id="WP_010867747.1">
    <property type="nucleotide sequence ID" value="NC_000868.1"/>
</dbReference>
<dbReference type="SMR" id="Q9V106"/>
<dbReference type="STRING" id="272844.PAB1947"/>
<dbReference type="KEGG" id="pab:PAB1947"/>
<dbReference type="PATRIC" id="fig|272844.11.peg.663"/>
<dbReference type="eggNOG" id="arCOG00973">
    <property type="taxonomic scope" value="Archaea"/>
</dbReference>
<dbReference type="HOGENOM" id="CLU_005316_7_0_2"/>
<dbReference type="OrthoDB" id="14725at2157"/>
<dbReference type="PhylomeDB" id="Q9V106"/>
<dbReference type="BRENDA" id="2.1.1.B43">
    <property type="organism ID" value="5242"/>
</dbReference>
<dbReference type="Proteomes" id="UP000000810">
    <property type="component" value="Chromosome"/>
</dbReference>
<dbReference type="Proteomes" id="UP000009139">
    <property type="component" value="Chromosome"/>
</dbReference>
<dbReference type="GO" id="GO:0005737">
    <property type="term" value="C:cytoplasm"/>
    <property type="evidence" value="ECO:0007669"/>
    <property type="project" value="UniProtKB-SubCell"/>
</dbReference>
<dbReference type="GO" id="GO:0016428">
    <property type="term" value="F:tRNA (cytidine-5-)-methyltransferase activity"/>
    <property type="evidence" value="ECO:0000314"/>
    <property type="project" value="UniProtKB"/>
</dbReference>
<dbReference type="GO" id="GO:0000049">
    <property type="term" value="F:tRNA binding"/>
    <property type="evidence" value="ECO:0000314"/>
    <property type="project" value="UniProtKB"/>
</dbReference>
<dbReference type="GO" id="GO:0030488">
    <property type="term" value="P:tRNA methylation"/>
    <property type="evidence" value="ECO:0000314"/>
    <property type="project" value="UniProtKB"/>
</dbReference>
<dbReference type="CDD" id="cd02440">
    <property type="entry name" value="AdoMet_MTases"/>
    <property type="match status" value="1"/>
</dbReference>
<dbReference type="Gene3D" id="3.30.70.1170">
    <property type="entry name" value="Sun protein, domain 3"/>
    <property type="match status" value="1"/>
</dbReference>
<dbReference type="Gene3D" id="3.40.50.150">
    <property type="entry name" value="Vaccinia Virus protein VP39"/>
    <property type="match status" value="1"/>
</dbReference>
<dbReference type="InterPro" id="IPR031341">
    <property type="entry name" value="Methyltr_RsmF_N"/>
</dbReference>
<dbReference type="InterPro" id="IPR049560">
    <property type="entry name" value="MeTrfase_RsmB-F_NOP2_cat"/>
</dbReference>
<dbReference type="InterPro" id="IPR001678">
    <property type="entry name" value="MeTrfase_RsmB-F_NOP2_dom"/>
</dbReference>
<dbReference type="InterPro" id="IPR011023">
    <property type="entry name" value="Nop2p"/>
</dbReference>
<dbReference type="InterPro" id="IPR023267">
    <property type="entry name" value="RCMT"/>
</dbReference>
<dbReference type="InterPro" id="IPR029063">
    <property type="entry name" value="SAM-dependent_MTases_sf"/>
</dbReference>
<dbReference type="InterPro" id="IPR053630">
    <property type="entry name" value="tRNA_Cytosine-C(5)-MTase"/>
</dbReference>
<dbReference type="NCBIfam" id="TIGR00446">
    <property type="entry name" value="nop2p"/>
    <property type="match status" value="1"/>
</dbReference>
<dbReference type="NCBIfam" id="NF040814">
    <property type="entry name" value="tRNA_cyt_mtase"/>
    <property type="match status" value="1"/>
</dbReference>
<dbReference type="PANTHER" id="PTHR22807:SF30">
    <property type="entry name" value="28S RRNA (CYTOSINE(4447)-C(5))-METHYLTRANSFERASE-RELATED"/>
    <property type="match status" value="1"/>
</dbReference>
<dbReference type="PANTHER" id="PTHR22807">
    <property type="entry name" value="NOP2 YEAST -RELATED NOL1/NOP2/FMU SUN DOMAIN-CONTAINING"/>
    <property type="match status" value="1"/>
</dbReference>
<dbReference type="Pfam" id="PF01189">
    <property type="entry name" value="Methyltr_RsmB-F"/>
    <property type="match status" value="1"/>
</dbReference>
<dbReference type="Pfam" id="PF17125">
    <property type="entry name" value="Methyltr_RsmF_N"/>
    <property type="match status" value="1"/>
</dbReference>
<dbReference type="PRINTS" id="PR02008">
    <property type="entry name" value="RCMTFAMILY"/>
</dbReference>
<dbReference type="SUPFAM" id="SSF53335">
    <property type="entry name" value="S-adenosyl-L-methionine-dependent methyltransferases"/>
    <property type="match status" value="1"/>
</dbReference>
<dbReference type="PROSITE" id="PS51686">
    <property type="entry name" value="SAM_MT_RSMB_NOP"/>
    <property type="match status" value="1"/>
</dbReference>
<protein>
    <recommendedName>
        <fullName>tRNA (cytosine(49)-C(5))-methyltransferase</fullName>
        <ecNumber>2.1.1.-</ecNumber>
    </recommendedName>
</protein>
<reference key="1">
    <citation type="journal article" date="2003" name="Mol. Microbiol.">
        <title>An integrated analysis of the genome of the hyperthermophilic archaeon Pyrococcus abyssi.</title>
        <authorList>
            <person name="Cohen G.N."/>
            <person name="Barbe V."/>
            <person name="Flament D."/>
            <person name="Galperin M."/>
            <person name="Heilig R."/>
            <person name="Lecompte O."/>
            <person name="Poch O."/>
            <person name="Prieur D."/>
            <person name="Querellou J."/>
            <person name="Ripp R."/>
            <person name="Thierry J.-C."/>
            <person name="Van der Oost J."/>
            <person name="Weissenbach J."/>
            <person name="Zivanovic Y."/>
            <person name="Forterre P."/>
        </authorList>
    </citation>
    <scope>NUCLEOTIDE SEQUENCE [LARGE SCALE GENOMIC DNA]</scope>
    <source>
        <strain>GE5 / Orsay</strain>
    </source>
</reference>
<reference key="2">
    <citation type="journal article" date="2012" name="Curr. Microbiol.">
        <title>Re-annotation of two hyperthermophilic archaea Pyrococcus abyssi GE5 and Pyrococcus furiosus DSM 3638.</title>
        <authorList>
            <person name="Gao J."/>
            <person name="Wang J."/>
        </authorList>
    </citation>
    <scope>GENOME REANNOTATION</scope>
    <source>
        <strain>GE5 / Orsay</strain>
    </source>
</reference>
<reference key="3">
    <citation type="journal article" date="2007" name="J. Biol. Chem.">
        <title>Archease from Pyrococcus abyssi improves substrate specificity and solubility of a tRNA m5C methyltransferase.</title>
        <authorList>
            <person name="Auxilien S."/>
            <person name="El Khadali F."/>
            <person name="Rasmussen A."/>
            <person name="Douthwaite S."/>
            <person name="Grosjean H."/>
        </authorList>
    </citation>
    <scope>FUNCTION</scope>
    <scope>TRNA-BINDING</scope>
    <scope>CATALYTIC ACTIVITY</scope>
    <scope>ACTIVITY REGULATION</scope>
    <scope>SUBUNIT</scope>
</reference>
<feature type="chain" id="PRO_0000406990" description="tRNA (cytosine(49)-C(5))-methyltransferase">
    <location>
        <begin position="1"/>
        <end position="311"/>
    </location>
</feature>
<feature type="active site" description="Nucleophile" evidence="1">
    <location>
        <position position="239"/>
    </location>
</feature>
<feature type="binding site" evidence="1">
    <location>
        <begin position="118"/>
        <end position="124"/>
    </location>
    <ligand>
        <name>S-adenosyl-L-methionine</name>
        <dbReference type="ChEBI" id="CHEBI:59789"/>
    </ligand>
</feature>
<feature type="binding site" evidence="1">
    <location>
        <position position="142"/>
    </location>
    <ligand>
        <name>S-adenosyl-L-methionine</name>
        <dbReference type="ChEBI" id="CHEBI:59789"/>
    </ligand>
</feature>
<feature type="binding site" evidence="1">
    <location>
        <position position="169"/>
    </location>
    <ligand>
        <name>S-adenosyl-L-methionine</name>
        <dbReference type="ChEBI" id="CHEBI:59789"/>
    </ligand>
</feature>
<feature type="binding site" evidence="1">
    <location>
        <position position="186"/>
    </location>
    <ligand>
        <name>S-adenosyl-L-methionine</name>
        <dbReference type="ChEBI" id="CHEBI:59789"/>
    </ligand>
</feature>
<accession>Q9V106</accession>
<accession>G8ZJ90</accession>
<gene>
    <name type="ordered locus">PYRAB06230</name>
    <name type="ORF">PAB1947</name>
</gene>
<evidence type="ECO:0000255" key="1">
    <source>
        <dbReference type="PROSITE-ProRule" id="PRU01023"/>
    </source>
</evidence>
<evidence type="ECO:0000269" key="2">
    <source>
    </source>
</evidence>
<evidence type="ECO:0000305" key="3"/>
<comment type="function">
    <text evidence="2">Catalyzes AdoMet-dependent formation of m5C in tRNA. In the presence of protein archease, specifically methylates the cytosine at position 49 (m5C49) of tRNA. In the absence of archease, catalyzes the formation of m5C at many locations in tRNAs or rRNAs.</text>
</comment>
<comment type="catalytic activity">
    <reaction evidence="2">
        <text>cytidine(49) in tRNA precursor + S-adenosyl-L-methionine = 5-methylcytidine(49) in tRNA precursor + S-adenosyl-L-homocysteine + H(+)</text>
        <dbReference type="Rhea" id="RHEA:54140"/>
        <dbReference type="Rhea" id="RHEA-COMP:13804"/>
        <dbReference type="Rhea" id="RHEA-COMP:13805"/>
        <dbReference type="ChEBI" id="CHEBI:15378"/>
        <dbReference type="ChEBI" id="CHEBI:57856"/>
        <dbReference type="ChEBI" id="CHEBI:59789"/>
        <dbReference type="ChEBI" id="CHEBI:74483"/>
        <dbReference type="ChEBI" id="CHEBI:82748"/>
    </reaction>
</comment>
<comment type="activity regulation">
    <text evidence="2">Substrate specificity and tendency to aggregate are influenced by archease.</text>
</comment>
<comment type="subunit">
    <text evidence="2">Forms a tripartite complex with archease and tRNA. Binds only the oligomeric forms of the archease.</text>
</comment>
<comment type="subcellular location">
    <subcellularLocation>
        <location evidence="3">Cytoplasm</location>
    </subcellularLocation>
</comment>
<comment type="similarity">
    <text evidence="1">Belongs to the class I-like SAM-binding methyltransferase superfamily. RsmB/NOP family.</text>
</comment>
<name>TRCM_PYRAB</name>
<organism>
    <name type="scientific">Pyrococcus abyssi (strain GE5 / Orsay)</name>
    <dbReference type="NCBI Taxonomy" id="272844"/>
    <lineage>
        <taxon>Archaea</taxon>
        <taxon>Methanobacteriati</taxon>
        <taxon>Methanobacteriota</taxon>
        <taxon>Thermococci</taxon>
        <taxon>Thermococcales</taxon>
        <taxon>Thermococcaceae</taxon>
        <taxon>Pyrococcus</taxon>
    </lineage>
</organism>
<sequence length="311" mass="35747">MDYKEEFKKINKKLVERYSKLDDSEEFWAYLYKPLRPSIRINTLKGNLKEIKALLEEKFELEPIPWTKGEGFYIKSYDVNYGQLIEYSLGLIIPQEASSMIPPVVLDPKPSEVILDMAAAPGSKTTQMAQYMENEGCIIANDAKRDRANILIANLTRAGVLIAKVTVKDGAYFARYENTFDRVLLDAPCSSVGMIRKNFKFARTWSIGKVYYHSRLQKRLILAAYKSLKPGGVLVYSTCTVDPLENEEVVDFLLQKTDAKLEKVKLPLKTSEPVIEWEGRKYSDEVRKTIRIHPQDNDTEAFYIAKIRKPR</sequence>
<keyword id="KW-0963">Cytoplasm</keyword>
<keyword id="KW-0489">Methyltransferase</keyword>
<keyword id="KW-0694">RNA-binding</keyword>
<keyword id="KW-0949">S-adenosyl-L-methionine</keyword>
<keyword id="KW-0808">Transferase</keyword>
<keyword id="KW-0819">tRNA processing</keyword>
<keyword id="KW-0820">tRNA-binding</keyword>